<feature type="chain" id="PRO_0000122367" description="Death-associated inhibitor of apoptosis 1">
    <location>
        <begin position="1"/>
        <end position="438"/>
    </location>
</feature>
<feature type="repeat" description="BIR 1">
    <location>
        <begin position="44"/>
        <end position="110"/>
    </location>
</feature>
<feature type="repeat" description="BIR 2">
    <location>
        <begin position="226"/>
        <end position="293"/>
    </location>
</feature>
<feature type="zinc finger region" description="RING-type" evidence="2">
    <location>
        <begin position="391"/>
        <end position="426"/>
    </location>
</feature>
<feature type="region of interest" description="Disordered" evidence="3">
    <location>
        <begin position="194"/>
        <end position="213"/>
    </location>
</feature>
<feature type="region of interest" description="Disordered" evidence="3">
    <location>
        <begin position="322"/>
        <end position="346"/>
    </location>
</feature>
<feature type="compositionally biased region" description="Low complexity" evidence="3">
    <location>
        <begin position="327"/>
        <end position="345"/>
    </location>
</feature>
<feature type="binding site" evidence="1">
    <location>
        <position position="263"/>
    </location>
    <ligand>
        <name>Zn(2+)</name>
        <dbReference type="ChEBI" id="CHEBI:29105"/>
    </ligand>
</feature>
<feature type="binding site" evidence="1">
    <location>
        <position position="266"/>
    </location>
    <ligand>
        <name>Zn(2+)</name>
        <dbReference type="ChEBI" id="CHEBI:29105"/>
    </ligand>
</feature>
<feature type="binding site" evidence="1">
    <location>
        <position position="283"/>
    </location>
    <ligand>
        <name>Zn(2+)</name>
        <dbReference type="ChEBI" id="CHEBI:29105"/>
    </ligand>
</feature>
<feature type="binding site" evidence="1">
    <location>
        <position position="290"/>
    </location>
    <ligand>
        <name>Zn(2+)</name>
        <dbReference type="ChEBI" id="CHEBI:29105"/>
    </ligand>
</feature>
<feature type="site" description="Cleavage; by HtrA2">
    <location>
        <begin position="162"/>
        <end position="163"/>
    </location>
</feature>
<feature type="site" description="Cleavage; by HtrA2">
    <location>
        <begin position="165"/>
        <end position="166"/>
    </location>
</feature>
<feature type="mutagenesis site" description="Destroys cleavage site." evidence="9">
    <original>I</original>
    <variation>D</variation>
    <location>
        <position position="162"/>
    </location>
</feature>
<feature type="mutagenesis site" description="Destroys cleavage site." evidence="9">
    <original>I</original>
    <variation>D</variation>
    <location>
        <position position="165"/>
    </location>
</feature>
<feature type="sequence conflict" description="In Ref. 1; AAC41609." evidence="16" ref="1">
    <original>S</original>
    <variation>T</variation>
    <location>
        <position position="319"/>
    </location>
</feature>
<feature type="sequence conflict" description="In Ref. 1; AAC41609." evidence="16" ref="1">
    <original>VA</original>
    <variation>DT</variation>
    <location>
        <begin position="324"/>
        <end position="325"/>
    </location>
</feature>
<feature type="helix" evidence="19">
    <location>
        <begin position="40"/>
        <end position="42"/>
    </location>
</feature>
<feature type="helix" evidence="20">
    <location>
        <begin position="44"/>
        <end position="48"/>
    </location>
</feature>
<feature type="turn" evidence="22">
    <location>
        <begin position="50"/>
        <end position="53"/>
    </location>
</feature>
<feature type="helix" evidence="20">
    <location>
        <begin position="61"/>
        <end position="66"/>
    </location>
</feature>
<feature type="strand" evidence="20">
    <location>
        <begin position="69"/>
        <end position="71"/>
    </location>
</feature>
<feature type="strand" evidence="20">
    <location>
        <begin position="78"/>
        <end position="80"/>
    </location>
</feature>
<feature type="turn" evidence="20">
    <location>
        <begin position="81"/>
        <end position="83"/>
    </location>
</feature>
<feature type="strand" evidence="20">
    <location>
        <begin position="86"/>
        <end position="89"/>
    </location>
</feature>
<feature type="helix" evidence="20">
    <location>
        <begin position="96"/>
        <end position="103"/>
    </location>
</feature>
<feature type="turn" evidence="20">
    <location>
        <begin position="108"/>
        <end position="112"/>
    </location>
</feature>
<feature type="helix" evidence="20">
    <location>
        <begin position="122"/>
        <end position="128"/>
    </location>
</feature>
<feature type="strand" evidence="21">
    <location>
        <begin position="135"/>
        <end position="137"/>
    </location>
</feature>
<feature type="helix" evidence="17">
    <location>
        <begin position="221"/>
        <end position="223"/>
    </location>
</feature>
<feature type="helix" evidence="17">
    <location>
        <begin position="226"/>
        <end position="232"/>
    </location>
</feature>
<feature type="helix" evidence="17">
    <location>
        <begin position="233"/>
        <end position="235"/>
    </location>
</feature>
<feature type="strand" evidence="18">
    <location>
        <begin position="240"/>
        <end position="242"/>
    </location>
</feature>
<feature type="helix" evidence="17">
    <location>
        <begin position="244"/>
        <end position="249"/>
    </location>
</feature>
<feature type="strand" evidence="17">
    <location>
        <begin position="252"/>
        <end position="254"/>
    </location>
</feature>
<feature type="strand" evidence="17">
    <location>
        <begin position="261"/>
        <end position="263"/>
    </location>
</feature>
<feature type="turn" evidence="17">
    <location>
        <begin position="264"/>
        <end position="266"/>
    </location>
</feature>
<feature type="strand" evidence="17">
    <location>
        <begin position="269"/>
        <end position="271"/>
    </location>
</feature>
<feature type="helix" evidence="17">
    <location>
        <begin position="279"/>
        <end position="286"/>
    </location>
</feature>
<feature type="helix" evidence="17">
    <location>
        <begin position="291"/>
        <end position="297"/>
    </location>
</feature>
<feature type="helix" evidence="17">
    <location>
        <begin position="299"/>
        <end position="307"/>
    </location>
</feature>
<feature type="helix" evidence="17">
    <location>
        <begin position="309"/>
        <end position="317"/>
    </location>
</feature>
<gene>
    <name type="primary">Diap1</name>
    <name type="synonym">Iap1</name>
    <name type="synonym">th</name>
    <name type="ORF">CG12284</name>
</gene>
<evidence type="ECO:0000255" key="1">
    <source>
        <dbReference type="PROSITE-ProRule" id="PRU00029"/>
    </source>
</evidence>
<evidence type="ECO:0000255" key="2">
    <source>
        <dbReference type="PROSITE-ProRule" id="PRU00175"/>
    </source>
</evidence>
<evidence type="ECO:0000256" key="3">
    <source>
        <dbReference type="SAM" id="MobiDB-lite"/>
    </source>
</evidence>
<evidence type="ECO:0000269" key="4">
    <source>
    </source>
</evidence>
<evidence type="ECO:0000269" key="5">
    <source>
    </source>
</evidence>
<evidence type="ECO:0000269" key="6">
    <source>
    </source>
</evidence>
<evidence type="ECO:0000269" key="7">
    <source>
    </source>
</evidence>
<evidence type="ECO:0000269" key="8">
    <source>
    </source>
</evidence>
<evidence type="ECO:0000269" key="9">
    <source>
    </source>
</evidence>
<evidence type="ECO:0000269" key="10">
    <source>
    </source>
</evidence>
<evidence type="ECO:0000269" key="11">
    <source>
    </source>
</evidence>
<evidence type="ECO:0000269" key="12">
    <source>
    </source>
</evidence>
<evidence type="ECO:0000269" key="13">
    <source>
    </source>
</evidence>
<evidence type="ECO:0000269" key="14">
    <source>
    </source>
</evidence>
<evidence type="ECO:0000269" key="15">
    <source>
    </source>
</evidence>
<evidence type="ECO:0000305" key="16"/>
<evidence type="ECO:0007829" key="17">
    <source>
        <dbReference type="PDB" id="1JD5"/>
    </source>
</evidence>
<evidence type="ECO:0007829" key="18">
    <source>
        <dbReference type="PDB" id="1Q4Q"/>
    </source>
</evidence>
<evidence type="ECO:0007829" key="19">
    <source>
        <dbReference type="PDB" id="1SDZ"/>
    </source>
</evidence>
<evidence type="ECO:0007829" key="20">
    <source>
        <dbReference type="PDB" id="1SE0"/>
    </source>
</evidence>
<evidence type="ECO:0007829" key="21">
    <source>
        <dbReference type="PDB" id="3SIP"/>
    </source>
</evidence>
<evidence type="ECO:0007829" key="22">
    <source>
        <dbReference type="PDB" id="3SIQ"/>
    </source>
</evidence>
<protein>
    <recommendedName>
        <fullName>Death-associated inhibitor of apoptosis 1</fullName>
        <ecNumber evidence="7 10 11">2.3.2.27</ecNumber>
    </recommendedName>
    <alternativeName>
        <fullName>Apoptosis 1 inhibitor</fullName>
    </alternativeName>
    <alternativeName>
        <fullName>E3 ubiquitin-protein ligase th</fullName>
    </alternativeName>
    <alternativeName>
        <fullName>Inhibitor of apoptosis 1</fullName>
    </alternativeName>
    <alternativeName>
        <fullName>Protein thread</fullName>
    </alternativeName>
    <alternativeName>
        <fullName evidence="16">RING-type E3 ubiquitin transferase Diap1</fullName>
    </alternativeName>
</protein>
<proteinExistence type="evidence at protein level"/>
<organism>
    <name type="scientific">Drosophila melanogaster</name>
    <name type="common">Fruit fly</name>
    <dbReference type="NCBI Taxonomy" id="7227"/>
    <lineage>
        <taxon>Eukaryota</taxon>
        <taxon>Metazoa</taxon>
        <taxon>Ecdysozoa</taxon>
        <taxon>Arthropoda</taxon>
        <taxon>Hexapoda</taxon>
        <taxon>Insecta</taxon>
        <taxon>Pterygota</taxon>
        <taxon>Neoptera</taxon>
        <taxon>Endopterygota</taxon>
        <taxon>Diptera</taxon>
        <taxon>Brachycera</taxon>
        <taxon>Muscomorpha</taxon>
        <taxon>Ephydroidea</taxon>
        <taxon>Drosophilidae</taxon>
        <taxon>Drosophila</taxon>
        <taxon>Sophophora</taxon>
    </lineage>
</organism>
<comment type="function">
    <text evidence="7 8 9 10 11 15">Anti-apoptotic protein which functions as a caspase regulator, using its E3 ubiquitin-protein ligase activity to smother caspase activity. Binds, ubiquitinates and inactivates initiator caspase Dronc, and effector caspases Drice and Dcp-1. Acts as a Nedd8-E3 ubiquitin-protein ligase for Drice. Suppresses apoptosis by targeting the apoptosome for ubiquitination and inactivation. Plays an important role in cell motility. Overexpression suppresses rpr and hid-dependent cell death in the eye. Interaction of Diap1 with Dronc is required to suppress Dronc-mediated cell death through Diap1-mediated ubiquitination of Dronc. Acts as a positive regulator of Wnt signaling.</text>
</comment>
<comment type="catalytic activity">
    <reaction evidence="7 10 11">
        <text>S-ubiquitinyl-[E2 ubiquitin-conjugating enzyme]-L-cysteine + [acceptor protein]-L-lysine = [E2 ubiquitin-conjugating enzyme]-L-cysteine + N(6)-ubiquitinyl-[acceptor protein]-L-lysine.</text>
        <dbReference type="EC" id="2.3.2.27"/>
    </reaction>
</comment>
<comment type="subunit">
    <text evidence="4 5 6 7 8 9 12 13">Interacts (via BIR 2 domain) with Dronc (via residues 114-125) (PubMed:10675329, PubMed:10984473, PubMed:14517550). Rpr, hid and grim can outcompete Dronc for binding Diap1 therefore removing Diap1-mediated ubiquitination (PubMed:10675329, PubMed:14517550). Interacts (via BIR 2 domain) with HtrA2; this displaces any bound Dronc. Interacts with Strica (PubMed:11550090). The N-terminally cleaved form interacts with Ubr3 (via UBR-type zinc finger) (PubMed:25146930, PubMed:26383956); the interaction promotes the recruitment and uniquitination of substrate capases such as Dronc (PubMed:25146930).</text>
</comment>
<comment type="interaction">
    <interactant intactId="EBI-456419">
        <id>Q24306</id>
    </interactant>
    <interactant intactId="EBI-156199">
        <id>P25843</id>
        <label>chic</label>
    </interactant>
    <organismsDiffer>false</organismsDiffer>
    <experiments>2</experiments>
</comment>
<comment type="interaction">
    <interactant intactId="EBI-456419">
        <id>Q24306</id>
    </interactant>
    <interactant intactId="EBI-91422">
        <id>O01382</id>
        <label>Drice</label>
    </interactant>
    <organismsDiffer>false</organismsDiffer>
    <experiments>3</experiments>
</comment>
<comment type="interaction">
    <interactant intactId="EBI-456419">
        <id>Q24306</id>
    </interactant>
    <interactant intactId="EBI-108311">
        <id>Q9XYF4</id>
        <label>Dronc</label>
    </interactant>
    <organismsDiffer>false</organismsDiffer>
    <experiments>9</experiments>
</comment>
<comment type="interaction">
    <interactant intactId="EBI-456419">
        <id>Q24306</id>
    </interactant>
    <interactant intactId="EBI-135509">
        <id>Q24106</id>
        <label>hid</label>
    </interactant>
    <organismsDiffer>false</organismsDiffer>
    <experiments>8</experiments>
</comment>
<comment type="interaction">
    <interactant intactId="EBI-456419">
        <id>Q24306</id>
    </interactant>
    <interactant intactId="EBI-139574">
        <id>Q9V3Y8</id>
        <label>IKKepsilon</label>
    </interactant>
    <organismsDiffer>false</organismsDiffer>
    <experiments>3</experiments>
</comment>
<comment type="interaction">
    <interactant intactId="EBI-456419">
        <id>Q24306</id>
    </interactant>
    <interactant intactId="EBI-106786">
        <id>Q24475</id>
        <label>rpr</label>
    </interactant>
    <organismsDiffer>false</organismsDiffer>
    <experiments>8</experiments>
</comment>
<comment type="developmental stage">
    <text evidence="14">Detected in wing disks (at protein level).</text>
</comment>
<comment type="PTM">
    <text evidence="8 9">Ubiquitinated and degraded by HtrA2 in apoptotic cells; proteolytic cleavage at specific sites in the BIR domain linker region generating inactive fragments. Mutation of one site reduces but does not abolish cleavage as another site is selected by the protease.</text>
</comment>
<comment type="similarity">
    <text evidence="16">Belongs to the IAP family.</text>
</comment>
<comment type="sequence caution" evidence="16">
    <conflict type="erroneous translation">
        <sequence resource="EMBL-CDS" id="AAM50178"/>
    </conflict>
    <text>Wrong choice of frame.</text>
</comment>
<reference key="1">
    <citation type="journal article" date="1995" name="Cell">
        <title>Drosophila homologs of baculovirus inhibitor of apoptosis proteins function to block cell death.</title>
        <authorList>
            <person name="Hay B.A."/>
            <person name="Wassarman D.A."/>
            <person name="Rubin G.M."/>
        </authorList>
    </citation>
    <scope>NUCLEOTIDE SEQUENCE [MRNA]</scope>
    <scope>FUNCTION</scope>
    <source>
        <tissue>Eye imaginal disk</tissue>
    </source>
</reference>
<reference key="2">
    <citation type="journal article" date="2000" name="Science">
        <title>The genome sequence of Drosophila melanogaster.</title>
        <authorList>
            <person name="Adams M.D."/>
            <person name="Celniker S.E."/>
            <person name="Holt R.A."/>
            <person name="Evans C.A."/>
            <person name="Gocayne J.D."/>
            <person name="Amanatides P.G."/>
            <person name="Scherer S.E."/>
            <person name="Li P.W."/>
            <person name="Hoskins R.A."/>
            <person name="Galle R.F."/>
            <person name="George R.A."/>
            <person name="Lewis S.E."/>
            <person name="Richards S."/>
            <person name="Ashburner M."/>
            <person name="Henderson S.N."/>
            <person name="Sutton G.G."/>
            <person name="Wortman J.R."/>
            <person name="Yandell M.D."/>
            <person name="Zhang Q."/>
            <person name="Chen L.X."/>
            <person name="Brandon R.C."/>
            <person name="Rogers Y.-H.C."/>
            <person name="Blazej R.G."/>
            <person name="Champe M."/>
            <person name="Pfeiffer B.D."/>
            <person name="Wan K.H."/>
            <person name="Doyle C."/>
            <person name="Baxter E.G."/>
            <person name="Helt G."/>
            <person name="Nelson C.R."/>
            <person name="Miklos G.L.G."/>
            <person name="Abril J.F."/>
            <person name="Agbayani A."/>
            <person name="An H.-J."/>
            <person name="Andrews-Pfannkoch C."/>
            <person name="Baldwin D."/>
            <person name="Ballew R.M."/>
            <person name="Basu A."/>
            <person name="Baxendale J."/>
            <person name="Bayraktaroglu L."/>
            <person name="Beasley E.M."/>
            <person name="Beeson K.Y."/>
            <person name="Benos P.V."/>
            <person name="Berman B.P."/>
            <person name="Bhandari D."/>
            <person name="Bolshakov S."/>
            <person name="Borkova D."/>
            <person name="Botchan M.R."/>
            <person name="Bouck J."/>
            <person name="Brokstein P."/>
            <person name="Brottier P."/>
            <person name="Burtis K.C."/>
            <person name="Busam D.A."/>
            <person name="Butler H."/>
            <person name="Cadieu E."/>
            <person name="Center A."/>
            <person name="Chandra I."/>
            <person name="Cherry J.M."/>
            <person name="Cawley S."/>
            <person name="Dahlke C."/>
            <person name="Davenport L.B."/>
            <person name="Davies P."/>
            <person name="de Pablos B."/>
            <person name="Delcher A."/>
            <person name="Deng Z."/>
            <person name="Mays A.D."/>
            <person name="Dew I."/>
            <person name="Dietz S.M."/>
            <person name="Dodson K."/>
            <person name="Doup L.E."/>
            <person name="Downes M."/>
            <person name="Dugan-Rocha S."/>
            <person name="Dunkov B.C."/>
            <person name="Dunn P."/>
            <person name="Durbin K.J."/>
            <person name="Evangelista C.C."/>
            <person name="Ferraz C."/>
            <person name="Ferriera S."/>
            <person name="Fleischmann W."/>
            <person name="Fosler C."/>
            <person name="Gabrielian A.E."/>
            <person name="Garg N.S."/>
            <person name="Gelbart W.M."/>
            <person name="Glasser K."/>
            <person name="Glodek A."/>
            <person name="Gong F."/>
            <person name="Gorrell J.H."/>
            <person name="Gu Z."/>
            <person name="Guan P."/>
            <person name="Harris M."/>
            <person name="Harris N.L."/>
            <person name="Harvey D.A."/>
            <person name="Heiman T.J."/>
            <person name="Hernandez J.R."/>
            <person name="Houck J."/>
            <person name="Hostin D."/>
            <person name="Houston K.A."/>
            <person name="Howland T.J."/>
            <person name="Wei M.-H."/>
            <person name="Ibegwam C."/>
            <person name="Jalali M."/>
            <person name="Kalush F."/>
            <person name="Karpen G.H."/>
            <person name="Ke Z."/>
            <person name="Kennison J.A."/>
            <person name="Ketchum K.A."/>
            <person name="Kimmel B.E."/>
            <person name="Kodira C.D."/>
            <person name="Kraft C.L."/>
            <person name="Kravitz S."/>
            <person name="Kulp D."/>
            <person name="Lai Z."/>
            <person name="Lasko P."/>
            <person name="Lei Y."/>
            <person name="Levitsky A.A."/>
            <person name="Li J.H."/>
            <person name="Li Z."/>
            <person name="Liang Y."/>
            <person name="Lin X."/>
            <person name="Liu X."/>
            <person name="Mattei B."/>
            <person name="McIntosh T.C."/>
            <person name="McLeod M.P."/>
            <person name="McPherson D."/>
            <person name="Merkulov G."/>
            <person name="Milshina N.V."/>
            <person name="Mobarry C."/>
            <person name="Morris J."/>
            <person name="Moshrefi A."/>
            <person name="Mount S.M."/>
            <person name="Moy M."/>
            <person name="Murphy B."/>
            <person name="Murphy L."/>
            <person name="Muzny D.M."/>
            <person name="Nelson D.L."/>
            <person name="Nelson D.R."/>
            <person name="Nelson K.A."/>
            <person name="Nixon K."/>
            <person name="Nusskern D.R."/>
            <person name="Pacleb J.M."/>
            <person name="Palazzolo M."/>
            <person name="Pittman G.S."/>
            <person name="Pan S."/>
            <person name="Pollard J."/>
            <person name="Puri V."/>
            <person name="Reese M.G."/>
            <person name="Reinert K."/>
            <person name="Remington K."/>
            <person name="Saunders R.D.C."/>
            <person name="Scheeler F."/>
            <person name="Shen H."/>
            <person name="Shue B.C."/>
            <person name="Siden-Kiamos I."/>
            <person name="Simpson M."/>
            <person name="Skupski M.P."/>
            <person name="Smith T.J."/>
            <person name="Spier E."/>
            <person name="Spradling A.C."/>
            <person name="Stapleton M."/>
            <person name="Strong R."/>
            <person name="Sun E."/>
            <person name="Svirskas R."/>
            <person name="Tector C."/>
            <person name="Turner R."/>
            <person name="Venter E."/>
            <person name="Wang A.H."/>
            <person name="Wang X."/>
            <person name="Wang Z.-Y."/>
            <person name="Wassarman D.A."/>
            <person name="Weinstock G.M."/>
            <person name="Weissenbach J."/>
            <person name="Williams S.M."/>
            <person name="Woodage T."/>
            <person name="Worley K.C."/>
            <person name="Wu D."/>
            <person name="Yang S."/>
            <person name="Yao Q.A."/>
            <person name="Ye J."/>
            <person name="Yeh R.-F."/>
            <person name="Zaveri J.S."/>
            <person name="Zhan M."/>
            <person name="Zhang G."/>
            <person name="Zhao Q."/>
            <person name="Zheng L."/>
            <person name="Zheng X.H."/>
            <person name="Zhong F.N."/>
            <person name="Zhong W."/>
            <person name="Zhou X."/>
            <person name="Zhu S.C."/>
            <person name="Zhu X."/>
            <person name="Smith H.O."/>
            <person name="Gibbs R.A."/>
            <person name="Myers E.W."/>
            <person name="Rubin G.M."/>
            <person name="Venter J.C."/>
        </authorList>
    </citation>
    <scope>NUCLEOTIDE SEQUENCE [LARGE SCALE GENOMIC DNA]</scope>
    <source>
        <strain>Berkeley</strain>
    </source>
</reference>
<reference key="3">
    <citation type="journal article" date="2002" name="Genome Biol.">
        <title>Annotation of the Drosophila melanogaster euchromatic genome: a systematic review.</title>
        <authorList>
            <person name="Misra S."/>
            <person name="Crosby M.A."/>
            <person name="Mungall C.J."/>
            <person name="Matthews B.B."/>
            <person name="Campbell K.S."/>
            <person name="Hradecky P."/>
            <person name="Huang Y."/>
            <person name="Kaminker J.S."/>
            <person name="Millburn G.H."/>
            <person name="Prochnik S.E."/>
            <person name="Smith C.D."/>
            <person name="Tupy J.L."/>
            <person name="Whitfield E.J."/>
            <person name="Bayraktaroglu L."/>
            <person name="Berman B.P."/>
            <person name="Bettencourt B.R."/>
            <person name="Celniker S.E."/>
            <person name="de Grey A.D.N.J."/>
            <person name="Drysdale R.A."/>
            <person name="Harris N.L."/>
            <person name="Richter J."/>
            <person name="Russo S."/>
            <person name="Schroeder A.J."/>
            <person name="Shu S.Q."/>
            <person name="Stapleton M."/>
            <person name="Yamada C."/>
            <person name="Ashburner M."/>
            <person name="Gelbart W.M."/>
            <person name="Rubin G.M."/>
            <person name="Lewis S.E."/>
        </authorList>
    </citation>
    <scope>GENOME REANNOTATION</scope>
    <source>
        <strain>Berkeley</strain>
    </source>
</reference>
<reference key="4">
    <citation type="submission" date="2009-01" db="EMBL/GenBank/DDBJ databases">
        <authorList>
            <person name="Stapleton M."/>
            <person name="Booth B."/>
            <person name="Carlson J.W."/>
            <person name="Frise E."/>
            <person name="Kapadia B."/>
            <person name="Park S."/>
            <person name="Wan K.H."/>
            <person name="Yu C."/>
            <person name="Celniker S.E."/>
        </authorList>
    </citation>
    <scope>NUCLEOTIDE SEQUENCE [LARGE SCALE MRNA]</scope>
    <source>
        <strain>Berkeley</strain>
        <tissue>Ovary</tissue>
    </source>
</reference>
<reference key="5">
    <citation type="journal article" date="2002" name="Genome Biol.">
        <title>A Drosophila full-length cDNA resource.</title>
        <authorList>
            <person name="Stapleton M."/>
            <person name="Carlson J.W."/>
            <person name="Brokstein P."/>
            <person name="Yu C."/>
            <person name="Champe M."/>
            <person name="George R.A."/>
            <person name="Guarin H."/>
            <person name="Kronmiller B."/>
            <person name="Pacleb J.M."/>
            <person name="Park S."/>
            <person name="Wan K.H."/>
            <person name="Rubin G.M."/>
            <person name="Celniker S.E."/>
        </authorList>
    </citation>
    <scope>NUCLEOTIDE SEQUENCE [LARGE SCALE MRNA] OF 39-438</scope>
    <source>
        <strain>Berkeley</strain>
        <tissue>Head</tissue>
    </source>
</reference>
<reference key="6">
    <citation type="journal article" date="2000" name="EMBO J.">
        <title>The Drosophila caspase DRONC is regulated by DIAP1.</title>
        <authorList>
            <person name="Meier P."/>
            <person name="Silke J."/>
            <person name="Leevers S.J."/>
            <person name="Evan G.I."/>
        </authorList>
    </citation>
    <scope>INTERACTION WITH DRONC</scope>
    <source>
        <tissue>Embryo</tissue>
    </source>
</reference>
<reference key="7">
    <citation type="journal article" date="2000" name="J. Biol. Chem.">
        <title>An essential role for the caspase dronc in developmentally programmed cell death in Drosophila.</title>
        <authorList>
            <person name="Quinn L.M."/>
            <person name="Dorstyn L."/>
            <person name="Mills K."/>
            <person name="Colussi P.A."/>
            <person name="Chen P."/>
            <person name="Coombe M."/>
            <person name="Abrams J."/>
            <person name="Kumar S."/>
            <person name="Richardson H."/>
        </authorList>
    </citation>
    <scope>INTERACTION WITH DRONC</scope>
</reference>
<reference key="8">
    <citation type="journal article" date="2001" name="Cell Death Differ.">
        <title>STRICA, a novel Drosophila melanogaster caspase with an unusual serine/threonine-rich prodomain, interacts with DIAP1 and DIAP2.</title>
        <authorList>
            <person name="Doumanis J."/>
            <person name="Quinn L."/>
            <person name="Richardson H."/>
            <person name="Kumar S."/>
        </authorList>
    </citation>
    <scope>INTERACTION WITH STRICA</scope>
</reference>
<reference key="9">
    <citation type="journal article" date="2007" name="Biochem. Biophys. Res. Commun.">
        <title>Evolution of mitochondrial cell death pathway: Proapoptotic role of HtrA2/Omi in Drosophila.</title>
        <authorList>
            <person name="Igaki T."/>
            <person name="Suzuki Y."/>
            <person name="Tokushige N."/>
            <person name="Aonuma H."/>
            <person name="Takahashi R."/>
            <person name="Miura M."/>
        </authorList>
    </citation>
    <scope>FUNCTION</scope>
    <scope>INTERACTION WITH HTRA2</scope>
    <scope>CLEAVAGE</scope>
</reference>
<reference key="10">
    <citation type="journal article" date="2008" name="Cell Death Differ.">
        <title>The interaction of DIAP1 with dOmi/HtrA2 regulates cell death in Drosophila.</title>
        <authorList>
            <person name="Khan F.S."/>
            <person name="Fujioka M."/>
            <person name="Datta P."/>
            <person name="Fernandes-Alnemri T."/>
            <person name="Jaynes J.B."/>
            <person name="Alnemri E.S."/>
        </authorList>
    </citation>
    <scope>FUNCTION</scope>
    <scope>INTERACTION WITH HTRA2</scope>
    <scope>CLEAVAGE</scope>
    <scope>MUTAGENESIS OF ILE-162 AND ILE-165</scope>
    <source>
        <strain>Berkeley</strain>
        <tissue>Testis</tissue>
    </source>
</reference>
<reference key="11">
    <citation type="journal article" date="2009" name="Trends Cell Biol.">
        <title>Ubiquitin-mediated regulation of apoptosis.</title>
        <authorList>
            <person name="Broemer M."/>
            <person name="Meier P."/>
        </authorList>
    </citation>
    <scope>REVIEW ON FUNCTION</scope>
</reference>
<reference key="12">
    <citation type="journal article" date="2010" name="Mol. Cell">
        <title>Systematic in vivo RNAi analysis identifies IAPs as NEDD8-E3 ligases.</title>
        <authorList>
            <person name="Broemer M."/>
            <person name="Tenev T."/>
            <person name="Rigbolt K.T."/>
            <person name="Hempel S."/>
            <person name="Blagoev B."/>
            <person name="Silke J."/>
            <person name="Ditzel M."/>
            <person name="Meier P."/>
        </authorList>
    </citation>
    <scope>FUNCTION AS AN E3 UBIQUITIN-PROTEIN LIGASE OF THE NEDD8 CONJUGATION PATHWAY</scope>
    <scope>CATALYTIC ACTIVITY</scope>
</reference>
<reference key="13">
    <citation type="journal article" date="2012" name="Cell Death Differ.">
        <title>IAPs: guardians of RIPK1.</title>
        <authorList>
            <person name="Darding M."/>
            <person name="Meier P."/>
        </authorList>
    </citation>
    <scope>REVIEW ON FUNCTION</scope>
</reference>
<reference key="14">
    <citation type="journal article" date="2012" name="Mol. Cell">
        <title>XIAP monoubiquitylates Groucho/TLE to promote canonical Wnt signaling.</title>
        <authorList>
            <person name="Hanson A.J."/>
            <person name="Wallace H.A."/>
            <person name="Freeman T.J."/>
            <person name="Beauchamp R.D."/>
            <person name="Lee L.A."/>
            <person name="Lee E."/>
        </authorList>
    </citation>
    <scope>FUNCTION</scope>
    <scope>CATALYTIC ACTIVITY</scope>
</reference>
<reference key="15">
    <citation type="journal article" date="2014" name="Cell Death Differ.">
        <title>Ubr3 E3 ligase regulates apoptosis by controlling the activity of DIAP1 in Drosophila.</title>
        <authorList>
            <person name="Huang Q."/>
            <person name="Tang X."/>
            <person name="Wang G."/>
            <person name="Fan Y."/>
            <person name="Ray L."/>
            <person name="Bergmann A."/>
            <person name="Belenkaya T.Y."/>
            <person name="Ling X."/>
            <person name="Yan D."/>
            <person name="Lin Y."/>
            <person name="Ye X."/>
            <person name="Shi W."/>
            <person name="Zhou X."/>
            <person name="Lu F."/>
            <person name="Qu J."/>
            <person name="Lin X."/>
        </authorList>
    </citation>
    <scope>INTERACTION WITH UBR3</scope>
</reference>
<reference key="16">
    <citation type="journal article" date="2015" name="Science">
        <title>Pri sORF peptides induce selective proteasome-mediated protein processing.</title>
        <authorList>
            <person name="Zanet J."/>
            <person name="Benrabah E."/>
            <person name="Li T."/>
            <person name="Pelissier-Monier A."/>
            <person name="Chanut-Delalande H."/>
            <person name="Ronsin B."/>
            <person name="Bellen H.J."/>
            <person name="Payre F."/>
            <person name="Plaza S."/>
        </authorList>
    </citation>
    <scope>INTERACTION WITH UBR3</scope>
</reference>
<reference key="17">
    <citation type="journal article" date="2016" name="Cell Discov.">
        <title>Ack promotes tissue growth via phosphorylation and suppression of the Hippo pathway component Expanded.</title>
        <authorList>
            <person name="Hu L."/>
            <person name="Xu J."/>
            <person name="Yin M.X."/>
            <person name="Zhang L."/>
            <person name="Lu Y."/>
            <person name="Wu W."/>
            <person name="Xue Z."/>
            <person name="Ho M.S."/>
            <person name="Gao G."/>
            <person name="Zhao Y."/>
            <person name="Zhang L."/>
        </authorList>
    </citation>
    <scope>DEVELOPMENTAL STAGE</scope>
</reference>
<reference key="18">
    <citation type="journal article" date="2001" name="Mol. Cell">
        <title>Structural analysis of a functional DIAP1 fragment bound to grim and hid peptides.</title>
        <authorList>
            <person name="Wu J.W."/>
            <person name="Cocina A.E."/>
            <person name="Chai J."/>
            <person name="Hay B.A."/>
            <person name="Shi Y."/>
        </authorList>
    </citation>
    <scope>X-RAY CRYSTALLOGRAPHY (2.7 ANGSTROMS) OF 215-310</scope>
</reference>
<reference key="19">
    <citation type="journal article" date="2003" name="Nat. Struct. Biol.">
        <title>Molecular mechanism of Reaper-Grim-Hid-mediated suppression of DIAP1-dependent Dronc ubiquitination.</title>
        <authorList>
            <person name="Chai J."/>
            <person name="Yan N."/>
            <person name="Huh J.R."/>
            <person name="Wu J.-W."/>
            <person name="Li W."/>
            <person name="Hay B.A."/>
            <person name="Shi Y."/>
        </authorList>
    </citation>
    <scope>X-RAY CRYSTALLOGRAPHY (2.1 ANGSTROMS) OF 201-324 IN COMPLEX WITH DRONC</scope>
    <scope>FUNCTION</scope>
    <scope>CATALYTIC ACTIVITY</scope>
</reference>
<keyword id="KW-0002">3D-structure</keyword>
<keyword id="KW-0053">Apoptosis</keyword>
<keyword id="KW-0479">Metal-binding</keyword>
<keyword id="KW-1185">Reference proteome</keyword>
<keyword id="KW-0677">Repeat</keyword>
<keyword id="KW-0808">Transferase</keyword>
<keyword id="KW-0832">Ubl conjugation</keyword>
<keyword id="KW-0833">Ubl conjugation pathway</keyword>
<keyword id="KW-0879">Wnt signaling pathway</keyword>
<keyword id="KW-0862">Zinc</keyword>
<keyword id="KW-0863">Zinc-finger</keyword>
<accession>Q24306</accession>
<accession>A4V1Z9</accession>
<accession>A9UN33</accession>
<accession>Q0E8E4</accession>
<accession>Q8MRM5</accession>
<accession>Q9VUX5</accession>
<name>DIAP1_DROME</name>
<sequence length="438" mass="48038">MASVVADLPSYGPIAFDQVDNNTNATQLFKNNINKTRMNDLNREETRLKTFTDWPLDWLDKRQLAQTGMYFTHAGDKVKCFFCGVEIGCWEQEDQPVPEHQRWSPNCPLLRRRTTNNVPINAEALDRILPPISYDICGANDSTLEMREHAYAEGVIPMSQLIQSIGMNAVNAAGSVTGTAAPQPRVTVATHASTATQATGDVQPETCRPSAASGNYFPQYPEYAIETARLRTFEAWPRNLKQKPHQLAEAGFFYTGVGDRVRCFSCGGGLMDWNDNDEPWEQHALWLSQCRFVKLMKGQLYIDTVAAKPVLAEEKEESSSIGGVAVASTQASEEEQQTSLSSEEAVSGDVAPSVAPTAATRIFNKIVEATAVATPSTNSSGSTSIPEEKLCKICYGAEYNTAFLPCGHVVACAKCASSVTKCPLCRKPFTDVMRVYFS</sequence>
<dbReference type="EC" id="2.3.2.27" evidence="7 10 11"/>
<dbReference type="EMBL" id="L49440">
    <property type="protein sequence ID" value="AAC41609.1"/>
    <property type="molecule type" value="mRNA"/>
</dbReference>
<dbReference type="EMBL" id="AE014296">
    <property type="protein sequence ID" value="AAF49548.1"/>
    <property type="molecule type" value="Genomic_DNA"/>
</dbReference>
<dbReference type="EMBL" id="AE014296">
    <property type="protein sequence ID" value="AAG22319.1"/>
    <property type="molecule type" value="Genomic_DNA"/>
</dbReference>
<dbReference type="EMBL" id="AE014296">
    <property type="protein sequence ID" value="AAN11757.1"/>
    <property type="molecule type" value="Genomic_DNA"/>
</dbReference>
<dbReference type="EMBL" id="BT031197">
    <property type="protein sequence ID" value="ABY20438.2"/>
    <property type="molecule type" value="mRNA"/>
</dbReference>
<dbReference type="EMBL" id="AY119524">
    <property type="protein sequence ID" value="AAM50178.1"/>
    <property type="status" value="ALT_SEQ"/>
    <property type="molecule type" value="mRNA"/>
</dbReference>
<dbReference type="RefSeq" id="NP_001261916.1">
    <property type="nucleotide sequence ID" value="NM_001274987.1"/>
</dbReference>
<dbReference type="RefSeq" id="NP_001261917.1">
    <property type="nucleotide sequence ID" value="NM_001274988.1"/>
</dbReference>
<dbReference type="RefSeq" id="NP_001261918.1">
    <property type="nucleotide sequence ID" value="NM_001274989.1"/>
</dbReference>
<dbReference type="RefSeq" id="NP_524101.2">
    <property type="nucleotide sequence ID" value="NM_079377.3"/>
</dbReference>
<dbReference type="RefSeq" id="NP_730097.1">
    <property type="nucleotide sequence ID" value="NM_168644.2"/>
</dbReference>
<dbReference type="RefSeq" id="NP_730098.1">
    <property type="nucleotide sequence ID" value="NM_168645.2"/>
</dbReference>
<dbReference type="PDB" id="1JD4">
    <property type="method" value="X-ray"/>
    <property type="resolution" value="2.70 A"/>
    <property type="chains" value="A/B=201-323"/>
</dbReference>
<dbReference type="PDB" id="1JD5">
    <property type="method" value="X-ray"/>
    <property type="resolution" value="1.90 A"/>
    <property type="chains" value="A=201-323"/>
</dbReference>
<dbReference type="PDB" id="1JD6">
    <property type="method" value="X-ray"/>
    <property type="resolution" value="2.70 A"/>
    <property type="chains" value="A=201-323"/>
</dbReference>
<dbReference type="PDB" id="1Q4Q">
    <property type="method" value="X-ray"/>
    <property type="resolution" value="2.10 A"/>
    <property type="chains" value="A/B/C/D/E/F/G/H/I/J=201-323"/>
</dbReference>
<dbReference type="PDB" id="1SDZ">
    <property type="method" value="X-ray"/>
    <property type="resolution" value="1.78 A"/>
    <property type="chains" value="A=30-145"/>
</dbReference>
<dbReference type="PDB" id="1SE0">
    <property type="method" value="X-ray"/>
    <property type="resolution" value="1.75 A"/>
    <property type="chains" value="A=30-145"/>
</dbReference>
<dbReference type="PDB" id="3SIP">
    <property type="method" value="X-ray"/>
    <property type="resolution" value="3.50 A"/>
    <property type="chains" value="E/F=31-145"/>
</dbReference>
<dbReference type="PDB" id="3SIQ">
    <property type="method" value="X-ray"/>
    <property type="resolution" value="2.40 A"/>
    <property type="chains" value="A/B/C/D/E/F=1-135"/>
</dbReference>
<dbReference type="PDBsum" id="1JD4"/>
<dbReference type="PDBsum" id="1JD5"/>
<dbReference type="PDBsum" id="1JD6"/>
<dbReference type="PDBsum" id="1Q4Q"/>
<dbReference type="PDBsum" id="1SDZ"/>
<dbReference type="PDBsum" id="1SE0"/>
<dbReference type="PDBsum" id="3SIP"/>
<dbReference type="PDBsum" id="3SIQ"/>
<dbReference type="SMR" id="Q24306"/>
<dbReference type="BioGRID" id="65064">
    <property type="interactions" value="116"/>
</dbReference>
<dbReference type="FunCoup" id="Q24306">
    <property type="interactions" value="462"/>
</dbReference>
<dbReference type="IntAct" id="Q24306">
    <property type="interactions" value="13"/>
</dbReference>
<dbReference type="MINT" id="Q24306"/>
<dbReference type="STRING" id="7227.FBpp0305794"/>
<dbReference type="MEROPS" id="I32.009"/>
<dbReference type="GlyGen" id="Q24306">
    <property type="glycosylation" value="2 sites"/>
</dbReference>
<dbReference type="PaxDb" id="7227-FBpp0305795"/>
<dbReference type="EnsemblMetazoa" id="FBtr0075499">
    <property type="protein sequence ID" value="FBpp0075254"/>
    <property type="gene ID" value="FBgn0260635"/>
</dbReference>
<dbReference type="EnsemblMetazoa" id="FBtr0075500">
    <property type="protein sequence ID" value="FBpp0075255"/>
    <property type="gene ID" value="FBgn0260635"/>
</dbReference>
<dbReference type="EnsemblMetazoa" id="FBtr0075501">
    <property type="protein sequence ID" value="FBpp0075256"/>
    <property type="gene ID" value="FBgn0260635"/>
</dbReference>
<dbReference type="EnsemblMetazoa" id="FBtr0333617">
    <property type="protein sequence ID" value="FBpp0305793"/>
    <property type="gene ID" value="FBgn0260635"/>
</dbReference>
<dbReference type="EnsemblMetazoa" id="FBtr0333618">
    <property type="protein sequence ID" value="FBpp0305794"/>
    <property type="gene ID" value="FBgn0260635"/>
</dbReference>
<dbReference type="EnsemblMetazoa" id="FBtr0333619">
    <property type="protein sequence ID" value="FBpp0305795"/>
    <property type="gene ID" value="FBgn0260635"/>
</dbReference>
<dbReference type="GeneID" id="39753"/>
<dbReference type="KEGG" id="dme:Dmel_CG12284"/>
<dbReference type="AGR" id="FB:FBgn0260635"/>
<dbReference type="CTD" id="39753"/>
<dbReference type="FlyBase" id="FBgn0260635">
    <property type="gene designation" value="Diap1"/>
</dbReference>
<dbReference type="VEuPathDB" id="VectorBase:FBgn0260635"/>
<dbReference type="eggNOG" id="KOG1101">
    <property type="taxonomic scope" value="Eukaryota"/>
</dbReference>
<dbReference type="HOGENOM" id="CLU_016347_1_0_1"/>
<dbReference type="InParanoid" id="Q24306"/>
<dbReference type="OMA" id="CMDENIA"/>
<dbReference type="OrthoDB" id="5855668at2759"/>
<dbReference type="PhylomeDB" id="Q24306"/>
<dbReference type="Reactome" id="R-DME-111459">
    <property type="pathway name" value="Activation of caspases through apoptosome-mediated cleavage"/>
</dbReference>
<dbReference type="Reactome" id="R-DME-111469">
    <property type="pathway name" value="SMAC, XIAP-regulated apoptotic response"/>
</dbReference>
<dbReference type="Reactome" id="R-DME-3769402">
    <property type="pathway name" value="Deactivation of the beta-catenin transactivating complex"/>
</dbReference>
<dbReference type="Reactome" id="R-DME-390150">
    <property type="pathway name" value="DS ligand bound to FT receptor"/>
</dbReference>
<dbReference type="Reactome" id="R-DME-5675482">
    <property type="pathway name" value="Regulation of necroptotic cell death"/>
</dbReference>
<dbReference type="Reactome" id="R-DME-8948747">
    <property type="pathway name" value="Regulation of PTEN localization"/>
</dbReference>
<dbReference type="Reactome" id="R-DME-8948751">
    <property type="pathway name" value="Regulation of PTEN stability and activity"/>
</dbReference>
<dbReference type="Reactome" id="R-DME-9627069">
    <property type="pathway name" value="Regulation of the apoptosome activity"/>
</dbReference>
<dbReference type="SignaLink" id="Q24306"/>
<dbReference type="BioGRID-ORCS" id="39753">
    <property type="hits" value="1 hit in 3 CRISPR screens"/>
</dbReference>
<dbReference type="EvolutionaryTrace" id="Q24306"/>
<dbReference type="GenomeRNAi" id="39753"/>
<dbReference type="PRO" id="PR:Q24306"/>
<dbReference type="Proteomes" id="UP000000803">
    <property type="component" value="Chromosome 3L"/>
</dbReference>
<dbReference type="Bgee" id="FBgn0260635">
    <property type="expression patterns" value="Expressed in adult tracheocyte (Drosophila) in insect leg and 323 other cell types or tissues"/>
</dbReference>
<dbReference type="ExpressionAtlas" id="Q24306">
    <property type="expression patterns" value="baseline and differential"/>
</dbReference>
<dbReference type="GO" id="GO:0005737">
    <property type="term" value="C:cytoplasm"/>
    <property type="evidence" value="ECO:0000314"/>
    <property type="project" value="FlyBase"/>
</dbReference>
<dbReference type="GO" id="GO:0005829">
    <property type="term" value="C:cytosol"/>
    <property type="evidence" value="ECO:0000304"/>
    <property type="project" value="Reactome"/>
</dbReference>
<dbReference type="GO" id="GO:0005634">
    <property type="term" value="C:nucleus"/>
    <property type="evidence" value="ECO:0000314"/>
    <property type="project" value="FlyBase"/>
</dbReference>
<dbReference type="GO" id="GO:0048471">
    <property type="term" value="C:perinuclear region of cytoplasm"/>
    <property type="evidence" value="ECO:0000314"/>
    <property type="project" value="FlyBase"/>
</dbReference>
<dbReference type="GO" id="GO:0089720">
    <property type="term" value="F:caspase binding"/>
    <property type="evidence" value="ECO:0000353"/>
    <property type="project" value="FlyBase"/>
</dbReference>
<dbReference type="GO" id="GO:0004869">
    <property type="term" value="F:cysteine-type endopeptidase inhibitor activity"/>
    <property type="evidence" value="ECO:0000314"/>
    <property type="project" value="FlyBase"/>
</dbReference>
<dbReference type="GO" id="GO:0043027">
    <property type="term" value="F:cysteine-type endopeptidase inhibitor activity involved in apoptotic process"/>
    <property type="evidence" value="ECO:0000314"/>
    <property type="project" value="FlyBase"/>
</dbReference>
<dbReference type="GO" id="GO:0061663">
    <property type="term" value="F:NEDD8 ligase activity"/>
    <property type="evidence" value="ECO:0000314"/>
    <property type="project" value="FlyBase"/>
</dbReference>
<dbReference type="GO" id="GO:0031624">
    <property type="term" value="F:ubiquitin conjugating enzyme binding"/>
    <property type="evidence" value="ECO:0000353"/>
    <property type="project" value="FlyBase"/>
</dbReference>
<dbReference type="GO" id="GO:0061630">
    <property type="term" value="F:ubiquitin protein ligase activity"/>
    <property type="evidence" value="ECO:0000314"/>
    <property type="project" value="FlyBase"/>
</dbReference>
<dbReference type="GO" id="GO:0031625">
    <property type="term" value="F:ubiquitin protein ligase binding"/>
    <property type="evidence" value="ECO:0000353"/>
    <property type="project" value="FlyBase"/>
</dbReference>
<dbReference type="GO" id="GO:0044390">
    <property type="term" value="F:ubiquitin-like protein conjugating enzyme binding"/>
    <property type="evidence" value="ECO:0000353"/>
    <property type="project" value="FlyBase"/>
</dbReference>
<dbReference type="GO" id="GO:0004842">
    <property type="term" value="F:ubiquitin-protein transferase activity"/>
    <property type="evidence" value="ECO:0000304"/>
    <property type="project" value="UniProtKB"/>
</dbReference>
<dbReference type="GO" id="GO:1990381">
    <property type="term" value="F:ubiquitin-specific protease binding"/>
    <property type="evidence" value="ECO:0000353"/>
    <property type="project" value="FlyBase"/>
</dbReference>
<dbReference type="GO" id="GO:0008270">
    <property type="term" value="F:zinc ion binding"/>
    <property type="evidence" value="ECO:0000255"/>
    <property type="project" value="FlyBase"/>
</dbReference>
<dbReference type="GO" id="GO:0048800">
    <property type="term" value="P:antennal morphogenesis"/>
    <property type="evidence" value="ECO:0000315"/>
    <property type="project" value="FlyBase"/>
</dbReference>
<dbReference type="GO" id="GO:0006915">
    <property type="term" value="P:apoptotic process"/>
    <property type="evidence" value="ECO:0000353"/>
    <property type="project" value="FlyBase"/>
</dbReference>
<dbReference type="GO" id="GO:0007298">
    <property type="term" value="P:border follicle cell migration"/>
    <property type="evidence" value="ECO:0000315"/>
    <property type="project" value="FlyBase"/>
</dbReference>
<dbReference type="GO" id="GO:0022416">
    <property type="term" value="P:chaeta development"/>
    <property type="evidence" value="ECO:0000315"/>
    <property type="project" value="FlyBase"/>
</dbReference>
<dbReference type="GO" id="GO:0043066">
    <property type="term" value="P:negative regulation of apoptotic process"/>
    <property type="evidence" value="ECO:0000314"/>
    <property type="project" value="UniProtKB"/>
</dbReference>
<dbReference type="GO" id="GO:0046673">
    <property type="term" value="P:negative regulation of compound eye retinal cell programmed cell death"/>
    <property type="evidence" value="ECO:0000315"/>
    <property type="project" value="FlyBase"/>
</dbReference>
<dbReference type="GO" id="GO:0046329">
    <property type="term" value="P:negative regulation of JNK cascade"/>
    <property type="evidence" value="ECO:0000316"/>
    <property type="project" value="FlyBase"/>
</dbReference>
<dbReference type="GO" id="GO:1903688">
    <property type="term" value="P:positive regulation of border follicle cell migration"/>
    <property type="evidence" value="ECO:0000315"/>
    <property type="project" value="FlyBase"/>
</dbReference>
<dbReference type="GO" id="GO:0090263">
    <property type="term" value="P:positive regulation of canonical Wnt signaling pathway"/>
    <property type="evidence" value="ECO:0000315"/>
    <property type="project" value="UniProtKB"/>
</dbReference>
<dbReference type="GO" id="GO:0031398">
    <property type="term" value="P:positive regulation of protein ubiquitination"/>
    <property type="evidence" value="ECO:0000314"/>
    <property type="project" value="FlyBase"/>
</dbReference>
<dbReference type="GO" id="GO:0045752">
    <property type="term" value="P:positive regulation of Toll signaling pathway"/>
    <property type="evidence" value="ECO:0000315"/>
    <property type="project" value="FlyBase"/>
</dbReference>
<dbReference type="GO" id="GO:0051865">
    <property type="term" value="P:protein autoubiquitination"/>
    <property type="evidence" value="ECO:0000314"/>
    <property type="project" value="FlyBase"/>
</dbReference>
<dbReference type="GO" id="GO:0070936">
    <property type="term" value="P:protein K48-linked ubiquitination"/>
    <property type="evidence" value="ECO:0000315"/>
    <property type="project" value="FlyBase"/>
</dbReference>
<dbReference type="GO" id="GO:0045116">
    <property type="term" value="P:protein neddylation"/>
    <property type="evidence" value="ECO:0000314"/>
    <property type="project" value="FlyBase"/>
</dbReference>
<dbReference type="GO" id="GO:0000209">
    <property type="term" value="P:protein polyubiquitination"/>
    <property type="evidence" value="ECO:0000314"/>
    <property type="project" value="FlyBase"/>
</dbReference>
<dbReference type="GO" id="GO:0051726">
    <property type="term" value="P:regulation of cell cycle"/>
    <property type="evidence" value="ECO:0000318"/>
    <property type="project" value="GO_Central"/>
</dbReference>
<dbReference type="GO" id="GO:0045035">
    <property type="term" value="P:sensory organ precursor cell division"/>
    <property type="evidence" value="ECO:0000316"/>
    <property type="project" value="FlyBase"/>
</dbReference>
<dbReference type="GO" id="GO:0007289">
    <property type="term" value="P:spermatid nucleus differentiation"/>
    <property type="evidence" value="ECO:0000315"/>
    <property type="project" value="FlyBase"/>
</dbReference>
<dbReference type="GO" id="GO:0007283">
    <property type="term" value="P:spermatogenesis"/>
    <property type="evidence" value="ECO:0000315"/>
    <property type="project" value="FlyBase"/>
</dbReference>
<dbReference type="GO" id="GO:0016055">
    <property type="term" value="P:Wnt signaling pathway"/>
    <property type="evidence" value="ECO:0007669"/>
    <property type="project" value="UniProtKB-KW"/>
</dbReference>
<dbReference type="CDD" id="cd00022">
    <property type="entry name" value="BIR"/>
    <property type="match status" value="2"/>
</dbReference>
<dbReference type="CDD" id="cd16510">
    <property type="entry name" value="RING-HC_IAPs"/>
    <property type="match status" value="1"/>
</dbReference>
<dbReference type="FunFam" id="3.30.40.10:FF:000184">
    <property type="entry name" value="Baculoviral IAP repeat containing 2"/>
    <property type="match status" value="1"/>
</dbReference>
<dbReference type="FunFam" id="1.10.1170.10:FF:000002">
    <property type="entry name" value="Baculoviral IAP repeat containing 7"/>
    <property type="match status" value="1"/>
</dbReference>
<dbReference type="FunFam" id="1.10.1170.10:FF:000017">
    <property type="entry name" value="Death-associated inhibitor of apoptosis 1"/>
    <property type="match status" value="1"/>
</dbReference>
<dbReference type="FunFam" id="1.10.1170.10:FF:000003">
    <property type="entry name" value="E3 ubiquitin-protein ligase XIAP"/>
    <property type="match status" value="1"/>
</dbReference>
<dbReference type="Gene3D" id="1.10.1170.10">
    <property type="entry name" value="Inhibitor Of Apoptosis Protein (2mihbC-IAP-1), Chain A"/>
    <property type="match status" value="2"/>
</dbReference>
<dbReference type="Gene3D" id="3.30.40.10">
    <property type="entry name" value="Zinc/RING finger domain, C3HC4 (zinc finger)"/>
    <property type="match status" value="1"/>
</dbReference>
<dbReference type="InterPro" id="IPR001370">
    <property type="entry name" value="BIR_rpt"/>
</dbReference>
<dbReference type="InterPro" id="IPR050784">
    <property type="entry name" value="IAP"/>
</dbReference>
<dbReference type="InterPro" id="IPR001841">
    <property type="entry name" value="Znf_RING"/>
</dbReference>
<dbReference type="InterPro" id="IPR013083">
    <property type="entry name" value="Znf_RING/FYVE/PHD"/>
</dbReference>
<dbReference type="PANTHER" id="PTHR10044:SF174">
    <property type="entry name" value="DEATH-ASSOCIATED INHIBITOR OF APOPTOSIS 1"/>
    <property type="match status" value="1"/>
</dbReference>
<dbReference type="PANTHER" id="PTHR10044">
    <property type="entry name" value="INHIBITOR OF APOPTOSIS"/>
    <property type="match status" value="1"/>
</dbReference>
<dbReference type="Pfam" id="PF00653">
    <property type="entry name" value="BIR"/>
    <property type="match status" value="2"/>
</dbReference>
<dbReference type="Pfam" id="PF13920">
    <property type="entry name" value="zf-C3HC4_3"/>
    <property type="match status" value="1"/>
</dbReference>
<dbReference type="SMART" id="SM00238">
    <property type="entry name" value="BIR"/>
    <property type="match status" value="2"/>
</dbReference>
<dbReference type="SMART" id="SM00184">
    <property type="entry name" value="RING"/>
    <property type="match status" value="1"/>
</dbReference>
<dbReference type="SUPFAM" id="SSF57924">
    <property type="entry name" value="Inhibitor of apoptosis (IAP) repeat"/>
    <property type="match status" value="2"/>
</dbReference>
<dbReference type="PROSITE" id="PS01282">
    <property type="entry name" value="BIR_REPEAT_1"/>
    <property type="match status" value="2"/>
</dbReference>
<dbReference type="PROSITE" id="PS50143">
    <property type="entry name" value="BIR_REPEAT_2"/>
    <property type="match status" value="2"/>
</dbReference>
<dbReference type="PROSITE" id="PS50089">
    <property type="entry name" value="ZF_RING_2"/>
    <property type="match status" value="1"/>
</dbReference>